<dbReference type="EMBL" id="BX571662">
    <property type="protein sequence ID" value="CAE11040.1"/>
    <property type="molecule type" value="Genomic_DNA"/>
</dbReference>
<dbReference type="RefSeq" id="WP_011139822.1">
    <property type="nucleotide sequence ID" value="NC_005090.1"/>
</dbReference>
<dbReference type="SMR" id="Q7M7W8"/>
<dbReference type="STRING" id="273121.WS2040"/>
<dbReference type="KEGG" id="wsu:WS2040"/>
<dbReference type="eggNOG" id="COG1160">
    <property type="taxonomic scope" value="Bacteria"/>
</dbReference>
<dbReference type="HOGENOM" id="CLU_016077_6_2_7"/>
<dbReference type="Proteomes" id="UP000000422">
    <property type="component" value="Chromosome"/>
</dbReference>
<dbReference type="GO" id="GO:0005525">
    <property type="term" value="F:GTP binding"/>
    <property type="evidence" value="ECO:0007669"/>
    <property type="project" value="UniProtKB-UniRule"/>
</dbReference>
<dbReference type="GO" id="GO:0043022">
    <property type="term" value="F:ribosome binding"/>
    <property type="evidence" value="ECO:0007669"/>
    <property type="project" value="TreeGrafter"/>
</dbReference>
<dbReference type="GO" id="GO:0042254">
    <property type="term" value="P:ribosome biogenesis"/>
    <property type="evidence" value="ECO:0007669"/>
    <property type="project" value="UniProtKB-KW"/>
</dbReference>
<dbReference type="CDD" id="cd01894">
    <property type="entry name" value="EngA1"/>
    <property type="match status" value="1"/>
</dbReference>
<dbReference type="CDD" id="cd01895">
    <property type="entry name" value="EngA2"/>
    <property type="match status" value="1"/>
</dbReference>
<dbReference type="FunFam" id="3.30.300.20:FF:000004">
    <property type="entry name" value="GTPase Der"/>
    <property type="match status" value="1"/>
</dbReference>
<dbReference type="FunFam" id="3.40.50.300:FF:000494">
    <property type="entry name" value="tRNA modification GTPase MnmE"/>
    <property type="match status" value="2"/>
</dbReference>
<dbReference type="Gene3D" id="3.30.300.20">
    <property type="match status" value="1"/>
</dbReference>
<dbReference type="Gene3D" id="3.40.50.300">
    <property type="entry name" value="P-loop containing nucleotide triphosphate hydrolases"/>
    <property type="match status" value="2"/>
</dbReference>
<dbReference type="HAMAP" id="MF_00195">
    <property type="entry name" value="GTPase_Der"/>
    <property type="match status" value="1"/>
</dbReference>
<dbReference type="InterPro" id="IPR031166">
    <property type="entry name" value="G_ENGA"/>
</dbReference>
<dbReference type="InterPro" id="IPR006073">
    <property type="entry name" value="GTP-bd"/>
</dbReference>
<dbReference type="InterPro" id="IPR016484">
    <property type="entry name" value="GTPase_Der"/>
</dbReference>
<dbReference type="InterPro" id="IPR032859">
    <property type="entry name" value="KH_dom-like"/>
</dbReference>
<dbReference type="InterPro" id="IPR015946">
    <property type="entry name" value="KH_dom-like_a/b"/>
</dbReference>
<dbReference type="InterPro" id="IPR027417">
    <property type="entry name" value="P-loop_NTPase"/>
</dbReference>
<dbReference type="InterPro" id="IPR005225">
    <property type="entry name" value="Small_GTP-bd"/>
</dbReference>
<dbReference type="NCBIfam" id="TIGR03594">
    <property type="entry name" value="GTPase_EngA"/>
    <property type="match status" value="1"/>
</dbReference>
<dbReference type="NCBIfam" id="TIGR00231">
    <property type="entry name" value="small_GTP"/>
    <property type="match status" value="2"/>
</dbReference>
<dbReference type="PANTHER" id="PTHR43834">
    <property type="entry name" value="GTPASE DER"/>
    <property type="match status" value="1"/>
</dbReference>
<dbReference type="PANTHER" id="PTHR43834:SF6">
    <property type="entry name" value="GTPASE DER"/>
    <property type="match status" value="1"/>
</dbReference>
<dbReference type="Pfam" id="PF14714">
    <property type="entry name" value="KH_dom-like"/>
    <property type="match status" value="1"/>
</dbReference>
<dbReference type="Pfam" id="PF01926">
    <property type="entry name" value="MMR_HSR1"/>
    <property type="match status" value="2"/>
</dbReference>
<dbReference type="PIRSF" id="PIRSF006485">
    <property type="entry name" value="GTP-binding_EngA"/>
    <property type="match status" value="1"/>
</dbReference>
<dbReference type="PRINTS" id="PR00326">
    <property type="entry name" value="GTP1OBG"/>
</dbReference>
<dbReference type="SUPFAM" id="SSF52540">
    <property type="entry name" value="P-loop containing nucleoside triphosphate hydrolases"/>
    <property type="match status" value="2"/>
</dbReference>
<dbReference type="PROSITE" id="PS51712">
    <property type="entry name" value="G_ENGA"/>
    <property type="match status" value="2"/>
</dbReference>
<gene>
    <name evidence="1" type="primary">der</name>
    <name type="synonym">engA</name>
    <name type="ordered locus">WS2040</name>
</gene>
<keyword id="KW-0342">GTP-binding</keyword>
<keyword id="KW-0547">Nucleotide-binding</keyword>
<keyword id="KW-1185">Reference proteome</keyword>
<keyword id="KW-0677">Repeat</keyword>
<keyword id="KW-0690">Ribosome biogenesis</keyword>
<name>DER_WOLSU</name>
<comment type="function">
    <text evidence="1">GTPase that plays an essential role in the late steps of ribosome biogenesis.</text>
</comment>
<comment type="subunit">
    <text evidence="1">Associates with the 50S ribosomal subunit.</text>
</comment>
<comment type="similarity">
    <text evidence="1">Belongs to the TRAFAC class TrmE-Era-EngA-EngB-Septin-like GTPase superfamily. EngA (Der) GTPase family.</text>
</comment>
<sequence length="470" mass="53065">MKTIAIIGKPNVGKSSLFNRLAKERIAITSDVSGTTRDIKKQVIEIEGNEVLLVDTGGIELKETGLFGKVRELALRAAKEADVVLYMVDGKMRPQDDDISLFRALHRENEHLFLVVNKIDNDKEKERGWEFAEFGAEKLLFISVSHNRGVGALQREIADVLGLEAPQEIVLSEDDEEDLEEYLVSLEEEEIEEIEEAPSEIRVGIIGKVNVGKSSLLNALLGSERSVVSDVAGTTIDPVDESMEIEGQKVLFVDTAGIRRRGKIEGIEKYALDRTQKALEKADIALLVLDCSLPFADLDEKIGGLVDKFSLGVIVVLNKWDIRSREFKEVEKEVRHRFKYLEHAPLVTVSAQNGRHIDMLKEKILKVYENFSRRIPTSILNKTIMEASARHPLPSDHGKIVRIYYATQYGVCPPQISLVMNRPNSLHFSYKRYVVNFLRDRFDFEGSPILIRARKRGEKLQDEIEALGED</sequence>
<accession>Q7M7W8</accession>
<protein>
    <recommendedName>
        <fullName evidence="1">GTPase Der</fullName>
    </recommendedName>
    <alternativeName>
        <fullName evidence="1">GTP-binding protein EngA</fullName>
    </alternativeName>
</protein>
<organism>
    <name type="scientific">Wolinella succinogenes (strain ATCC 29543 / DSM 1740 / CCUG 13145 / JCM 31913 / LMG 7466 / NCTC 11488 / FDC 602W)</name>
    <name type="common">Vibrio succinogenes</name>
    <dbReference type="NCBI Taxonomy" id="273121"/>
    <lineage>
        <taxon>Bacteria</taxon>
        <taxon>Pseudomonadati</taxon>
        <taxon>Campylobacterota</taxon>
        <taxon>Epsilonproteobacteria</taxon>
        <taxon>Campylobacterales</taxon>
        <taxon>Helicobacteraceae</taxon>
        <taxon>Wolinella</taxon>
    </lineage>
</organism>
<feature type="chain" id="PRO_0000179072" description="GTPase Der">
    <location>
        <begin position="1"/>
        <end position="470"/>
    </location>
</feature>
<feature type="domain" description="EngA-type G 1">
    <location>
        <begin position="2"/>
        <end position="165"/>
    </location>
</feature>
<feature type="domain" description="EngA-type G 2">
    <location>
        <begin position="201"/>
        <end position="372"/>
    </location>
</feature>
<feature type="domain" description="KH-like" evidence="1">
    <location>
        <begin position="373"/>
        <end position="457"/>
    </location>
</feature>
<feature type="binding site" evidence="1">
    <location>
        <begin position="8"/>
        <end position="15"/>
    </location>
    <ligand>
        <name>GTP</name>
        <dbReference type="ChEBI" id="CHEBI:37565"/>
        <label>1</label>
    </ligand>
</feature>
<feature type="binding site" evidence="1">
    <location>
        <begin position="55"/>
        <end position="59"/>
    </location>
    <ligand>
        <name>GTP</name>
        <dbReference type="ChEBI" id="CHEBI:37565"/>
        <label>1</label>
    </ligand>
</feature>
<feature type="binding site" evidence="1">
    <location>
        <begin position="117"/>
        <end position="120"/>
    </location>
    <ligand>
        <name>GTP</name>
        <dbReference type="ChEBI" id="CHEBI:37565"/>
        <label>1</label>
    </ligand>
</feature>
<feature type="binding site" evidence="1">
    <location>
        <begin position="207"/>
        <end position="214"/>
    </location>
    <ligand>
        <name>GTP</name>
        <dbReference type="ChEBI" id="CHEBI:37565"/>
        <label>2</label>
    </ligand>
</feature>
<feature type="binding site" evidence="1">
    <location>
        <begin position="254"/>
        <end position="258"/>
    </location>
    <ligand>
        <name>GTP</name>
        <dbReference type="ChEBI" id="CHEBI:37565"/>
        <label>2</label>
    </ligand>
</feature>
<feature type="binding site" evidence="1">
    <location>
        <begin position="318"/>
        <end position="321"/>
    </location>
    <ligand>
        <name>GTP</name>
        <dbReference type="ChEBI" id="CHEBI:37565"/>
        <label>2</label>
    </ligand>
</feature>
<evidence type="ECO:0000255" key="1">
    <source>
        <dbReference type="HAMAP-Rule" id="MF_00195"/>
    </source>
</evidence>
<proteinExistence type="inferred from homology"/>
<reference key="1">
    <citation type="journal article" date="2003" name="Proc. Natl. Acad. Sci. U.S.A.">
        <title>Complete genome sequence and analysis of Wolinella succinogenes.</title>
        <authorList>
            <person name="Baar C."/>
            <person name="Eppinger M."/>
            <person name="Raddatz G."/>
            <person name="Simon J."/>
            <person name="Lanz C."/>
            <person name="Klimmek O."/>
            <person name="Nandakumar R."/>
            <person name="Gross R."/>
            <person name="Rosinus A."/>
            <person name="Keller H."/>
            <person name="Jagtap P."/>
            <person name="Linke B."/>
            <person name="Meyer F."/>
            <person name="Lederer H."/>
            <person name="Schuster S.C."/>
        </authorList>
    </citation>
    <scope>NUCLEOTIDE SEQUENCE [LARGE SCALE GENOMIC DNA]</scope>
    <source>
        <strain>ATCC 29543 / DSM 1740 / CCUG 13145 / JCM 31913 / LMG 7466 / NCTC 11488 / FDC 602W</strain>
    </source>
</reference>